<gene>
    <name evidence="1" type="primary">lipA</name>
    <name type="ordered locus">SAS0795</name>
</gene>
<evidence type="ECO:0000255" key="1">
    <source>
        <dbReference type="HAMAP-Rule" id="MF_00206"/>
    </source>
</evidence>
<evidence type="ECO:0000255" key="2">
    <source>
        <dbReference type="PROSITE-ProRule" id="PRU01266"/>
    </source>
</evidence>
<evidence type="ECO:0000256" key="3">
    <source>
        <dbReference type="SAM" id="MobiDB-lite"/>
    </source>
</evidence>
<organism>
    <name type="scientific">Staphylococcus aureus (strain MSSA476)</name>
    <dbReference type="NCBI Taxonomy" id="282459"/>
    <lineage>
        <taxon>Bacteria</taxon>
        <taxon>Bacillati</taxon>
        <taxon>Bacillota</taxon>
        <taxon>Bacilli</taxon>
        <taxon>Bacillales</taxon>
        <taxon>Staphylococcaceae</taxon>
        <taxon>Staphylococcus</taxon>
    </lineage>
</organism>
<reference key="1">
    <citation type="journal article" date="2004" name="Proc. Natl. Acad. Sci. U.S.A.">
        <title>Complete genomes of two clinical Staphylococcus aureus strains: evidence for the rapid evolution of virulence and drug resistance.</title>
        <authorList>
            <person name="Holden M.T.G."/>
            <person name="Feil E.J."/>
            <person name="Lindsay J.A."/>
            <person name="Peacock S.J."/>
            <person name="Day N.P.J."/>
            <person name="Enright M.C."/>
            <person name="Foster T.J."/>
            <person name="Moore C.E."/>
            <person name="Hurst L."/>
            <person name="Atkin R."/>
            <person name="Barron A."/>
            <person name="Bason N."/>
            <person name="Bentley S.D."/>
            <person name="Chillingworth C."/>
            <person name="Chillingworth T."/>
            <person name="Churcher C."/>
            <person name="Clark L."/>
            <person name="Corton C."/>
            <person name="Cronin A."/>
            <person name="Doggett J."/>
            <person name="Dowd L."/>
            <person name="Feltwell T."/>
            <person name="Hance Z."/>
            <person name="Harris B."/>
            <person name="Hauser H."/>
            <person name="Holroyd S."/>
            <person name="Jagels K."/>
            <person name="James K.D."/>
            <person name="Lennard N."/>
            <person name="Line A."/>
            <person name="Mayes R."/>
            <person name="Moule S."/>
            <person name="Mungall K."/>
            <person name="Ormond D."/>
            <person name="Quail M.A."/>
            <person name="Rabbinowitsch E."/>
            <person name="Rutherford K.M."/>
            <person name="Sanders M."/>
            <person name="Sharp S."/>
            <person name="Simmonds M."/>
            <person name="Stevens K."/>
            <person name="Whitehead S."/>
            <person name="Barrell B.G."/>
            <person name="Spratt B.G."/>
            <person name="Parkhill J."/>
        </authorList>
    </citation>
    <scope>NUCLEOTIDE SEQUENCE [LARGE SCALE GENOMIC DNA]</scope>
    <source>
        <strain>MSSA476</strain>
    </source>
</reference>
<name>LIPA_STAAS</name>
<feature type="chain" id="PRO_0000102361" description="Lipoyl synthase">
    <location>
        <begin position="1"/>
        <end position="305"/>
    </location>
</feature>
<feature type="domain" description="Radical SAM core" evidence="2">
    <location>
        <begin position="54"/>
        <end position="270"/>
    </location>
</feature>
<feature type="region of interest" description="Disordered" evidence="3">
    <location>
        <begin position="283"/>
        <end position="305"/>
    </location>
</feature>
<feature type="compositionally biased region" description="Basic and acidic residues" evidence="3">
    <location>
        <begin position="283"/>
        <end position="298"/>
    </location>
</feature>
<feature type="binding site" evidence="1">
    <location>
        <position position="41"/>
    </location>
    <ligand>
        <name>[4Fe-4S] cluster</name>
        <dbReference type="ChEBI" id="CHEBI:49883"/>
        <label>1</label>
    </ligand>
</feature>
<feature type="binding site" evidence="1">
    <location>
        <position position="46"/>
    </location>
    <ligand>
        <name>[4Fe-4S] cluster</name>
        <dbReference type="ChEBI" id="CHEBI:49883"/>
        <label>1</label>
    </ligand>
</feature>
<feature type="binding site" evidence="1">
    <location>
        <position position="52"/>
    </location>
    <ligand>
        <name>[4Fe-4S] cluster</name>
        <dbReference type="ChEBI" id="CHEBI:49883"/>
        <label>1</label>
    </ligand>
</feature>
<feature type="binding site" evidence="1">
    <location>
        <position position="68"/>
    </location>
    <ligand>
        <name>[4Fe-4S] cluster</name>
        <dbReference type="ChEBI" id="CHEBI:49883"/>
        <label>2</label>
        <note>4Fe-4S-S-AdoMet</note>
    </ligand>
</feature>
<feature type="binding site" evidence="1">
    <location>
        <position position="72"/>
    </location>
    <ligand>
        <name>[4Fe-4S] cluster</name>
        <dbReference type="ChEBI" id="CHEBI:49883"/>
        <label>2</label>
        <note>4Fe-4S-S-AdoMet</note>
    </ligand>
</feature>
<feature type="binding site" evidence="1">
    <location>
        <position position="75"/>
    </location>
    <ligand>
        <name>[4Fe-4S] cluster</name>
        <dbReference type="ChEBI" id="CHEBI:49883"/>
        <label>2</label>
        <note>4Fe-4S-S-AdoMet</note>
    </ligand>
</feature>
<feature type="binding site" evidence="1">
    <location>
        <position position="281"/>
    </location>
    <ligand>
        <name>[4Fe-4S] cluster</name>
        <dbReference type="ChEBI" id="CHEBI:49883"/>
        <label>1</label>
    </ligand>
</feature>
<sequence length="305" mass="34885">MATKNEEILRKPDWLKIKLNTNENYTGLKKMMREKNLNTVCEEAKCPNIHECWGARRTATFMILGAVCTRACRFCAVKTGLPNELDLNEPERVAESVELMNLKHVVITAVARDDLRDAGSNVYAETVRKVRERNPFTTIEILPSDMGGDYDALETLMASRPDILNHNIETVRRLTPRVRARATYDRTLEFLRRSKELQPDIPTKSSIMVGLGETIEEIYETMDDLRANDVDILTIGQYLQPSRKHLKVQKYYTPLEFGKLRKVAMDKGFKHCQAGPLVRSSYHADEQVNEAAKEKQRQGEAQLNS</sequence>
<protein>
    <recommendedName>
        <fullName evidence="1">Lipoyl synthase</fullName>
        <ecNumber evidence="1">2.8.1.8</ecNumber>
    </recommendedName>
    <alternativeName>
        <fullName evidence="1">Lip-syn</fullName>
        <shortName evidence="1">LS</shortName>
    </alternativeName>
    <alternativeName>
        <fullName evidence="1">Lipoate synthase</fullName>
    </alternativeName>
    <alternativeName>
        <fullName evidence="1">Lipoic acid synthase</fullName>
    </alternativeName>
    <alternativeName>
        <fullName evidence="1">Sulfur insertion protein LipA</fullName>
    </alternativeName>
</protein>
<keyword id="KW-0004">4Fe-4S</keyword>
<keyword id="KW-0963">Cytoplasm</keyword>
<keyword id="KW-0408">Iron</keyword>
<keyword id="KW-0411">Iron-sulfur</keyword>
<keyword id="KW-0479">Metal-binding</keyword>
<keyword id="KW-0949">S-adenosyl-L-methionine</keyword>
<keyword id="KW-0808">Transferase</keyword>
<comment type="function">
    <text evidence="1">Catalyzes the radical-mediated insertion of two sulfur atoms into the C-6 and C-8 positions of the octanoyl moiety bound to the lipoyl domains of lipoate-dependent enzymes, thereby converting the octanoylated domains into lipoylated derivatives.</text>
</comment>
<comment type="catalytic activity">
    <reaction evidence="1">
        <text>[[Fe-S] cluster scaffold protein carrying a second [4Fe-4S](2+) cluster] + N(6)-octanoyl-L-lysyl-[protein] + 2 oxidized [2Fe-2S]-[ferredoxin] + 2 S-adenosyl-L-methionine + 4 H(+) = [[Fe-S] cluster scaffold protein] + N(6)-[(R)-dihydrolipoyl]-L-lysyl-[protein] + 4 Fe(3+) + 2 hydrogen sulfide + 2 5'-deoxyadenosine + 2 L-methionine + 2 reduced [2Fe-2S]-[ferredoxin]</text>
        <dbReference type="Rhea" id="RHEA:16585"/>
        <dbReference type="Rhea" id="RHEA-COMP:9928"/>
        <dbReference type="Rhea" id="RHEA-COMP:10000"/>
        <dbReference type="Rhea" id="RHEA-COMP:10001"/>
        <dbReference type="Rhea" id="RHEA-COMP:10475"/>
        <dbReference type="Rhea" id="RHEA-COMP:14568"/>
        <dbReference type="Rhea" id="RHEA-COMP:14569"/>
        <dbReference type="ChEBI" id="CHEBI:15378"/>
        <dbReference type="ChEBI" id="CHEBI:17319"/>
        <dbReference type="ChEBI" id="CHEBI:29034"/>
        <dbReference type="ChEBI" id="CHEBI:29919"/>
        <dbReference type="ChEBI" id="CHEBI:33722"/>
        <dbReference type="ChEBI" id="CHEBI:33737"/>
        <dbReference type="ChEBI" id="CHEBI:33738"/>
        <dbReference type="ChEBI" id="CHEBI:57844"/>
        <dbReference type="ChEBI" id="CHEBI:59789"/>
        <dbReference type="ChEBI" id="CHEBI:78809"/>
        <dbReference type="ChEBI" id="CHEBI:83100"/>
        <dbReference type="EC" id="2.8.1.8"/>
    </reaction>
</comment>
<comment type="cofactor">
    <cofactor evidence="1">
        <name>[4Fe-4S] cluster</name>
        <dbReference type="ChEBI" id="CHEBI:49883"/>
    </cofactor>
    <text evidence="1">Binds 2 [4Fe-4S] clusters per subunit. One cluster is coordinated with 3 cysteines and an exchangeable S-adenosyl-L-methionine.</text>
</comment>
<comment type="pathway">
    <text evidence="1">Protein modification; protein lipoylation via endogenous pathway; protein N(6)-(lipoyl)lysine from octanoyl-[acyl-carrier-protein].</text>
</comment>
<comment type="subcellular location">
    <subcellularLocation>
        <location evidence="1">Cytoplasm</location>
    </subcellularLocation>
</comment>
<comment type="similarity">
    <text evidence="1">Belongs to the radical SAM superfamily. Lipoyl synthase family.</text>
</comment>
<accession>Q6GB01</accession>
<proteinExistence type="inferred from homology"/>
<dbReference type="EC" id="2.8.1.8" evidence="1"/>
<dbReference type="EMBL" id="BX571857">
    <property type="protein sequence ID" value="CAG42570.1"/>
    <property type="molecule type" value="Genomic_DNA"/>
</dbReference>
<dbReference type="RefSeq" id="WP_000201875.1">
    <property type="nucleotide sequence ID" value="NC_002953.3"/>
</dbReference>
<dbReference type="SMR" id="Q6GB01"/>
<dbReference type="GeneID" id="98345243"/>
<dbReference type="KEGG" id="sas:SAS0795"/>
<dbReference type="HOGENOM" id="CLU_033144_2_1_9"/>
<dbReference type="GO" id="GO:0005737">
    <property type="term" value="C:cytoplasm"/>
    <property type="evidence" value="ECO:0007669"/>
    <property type="project" value="UniProtKB-SubCell"/>
</dbReference>
<dbReference type="GO" id="GO:0051539">
    <property type="term" value="F:4 iron, 4 sulfur cluster binding"/>
    <property type="evidence" value="ECO:0007669"/>
    <property type="project" value="UniProtKB-UniRule"/>
</dbReference>
<dbReference type="GO" id="GO:0016992">
    <property type="term" value="F:lipoate synthase activity"/>
    <property type="evidence" value="ECO:0007669"/>
    <property type="project" value="UniProtKB-UniRule"/>
</dbReference>
<dbReference type="GO" id="GO:0046872">
    <property type="term" value="F:metal ion binding"/>
    <property type="evidence" value="ECO:0007669"/>
    <property type="project" value="UniProtKB-KW"/>
</dbReference>
<dbReference type="CDD" id="cd01335">
    <property type="entry name" value="Radical_SAM"/>
    <property type="match status" value="1"/>
</dbReference>
<dbReference type="FunFam" id="3.20.20.70:FF:000040">
    <property type="entry name" value="Lipoyl synthase"/>
    <property type="match status" value="1"/>
</dbReference>
<dbReference type="Gene3D" id="3.20.20.70">
    <property type="entry name" value="Aldolase class I"/>
    <property type="match status" value="1"/>
</dbReference>
<dbReference type="HAMAP" id="MF_00206">
    <property type="entry name" value="Lipoyl_synth"/>
    <property type="match status" value="1"/>
</dbReference>
<dbReference type="InterPro" id="IPR013785">
    <property type="entry name" value="Aldolase_TIM"/>
</dbReference>
<dbReference type="InterPro" id="IPR006638">
    <property type="entry name" value="Elp3/MiaA/NifB-like_rSAM"/>
</dbReference>
<dbReference type="InterPro" id="IPR031691">
    <property type="entry name" value="LIAS_N"/>
</dbReference>
<dbReference type="InterPro" id="IPR003698">
    <property type="entry name" value="Lipoyl_synth"/>
</dbReference>
<dbReference type="InterPro" id="IPR007197">
    <property type="entry name" value="rSAM"/>
</dbReference>
<dbReference type="NCBIfam" id="TIGR00510">
    <property type="entry name" value="lipA"/>
    <property type="match status" value="1"/>
</dbReference>
<dbReference type="NCBIfam" id="NF004019">
    <property type="entry name" value="PRK05481.1"/>
    <property type="match status" value="1"/>
</dbReference>
<dbReference type="NCBIfam" id="NF009544">
    <property type="entry name" value="PRK12928.1"/>
    <property type="match status" value="1"/>
</dbReference>
<dbReference type="PANTHER" id="PTHR10949">
    <property type="entry name" value="LIPOYL SYNTHASE"/>
    <property type="match status" value="1"/>
</dbReference>
<dbReference type="PANTHER" id="PTHR10949:SF0">
    <property type="entry name" value="LIPOYL SYNTHASE, MITOCHONDRIAL"/>
    <property type="match status" value="1"/>
</dbReference>
<dbReference type="Pfam" id="PF16881">
    <property type="entry name" value="LIAS_N"/>
    <property type="match status" value="1"/>
</dbReference>
<dbReference type="Pfam" id="PF04055">
    <property type="entry name" value="Radical_SAM"/>
    <property type="match status" value="1"/>
</dbReference>
<dbReference type="PIRSF" id="PIRSF005963">
    <property type="entry name" value="Lipoyl_synth"/>
    <property type="match status" value="1"/>
</dbReference>
<dbReference type="SFLD" id="SFLDF00271">
    <property type="entry name" value="lipoyl_synthase"/>
    <property type="match status" value="1"/>
</dbReference>
<dbReference type="SFLD" id="SFLDS00029">
    <property type="entry name" value="Radical_SAM"/>
    <property type="match status" value="1"/>
</dbReference>
<dbReference type="SMART" id="SM00729">
    <property type="entry name" value="Elp3"/>
    <property type="match status" value="1"/>
</dbReference>
<dbReference type="SUPFAM" id="SSF102114">
    <property type="entry name" value="Radical SAM enzymes"/>
    <property type="match status" value="1"/>
</dbReference>
<dbReference type="PROSITE" id="PS51918">
    <property type="entry name" value="RADICAL_SAM"/>
    <property type="match status" value="1"/>
</dbReference>